<keyword id="KW-0687">Ribonucleoprotein</keyword>
<keyword id="KW-0689">Ribosomal protein</keyword>
<sequence>MAHKKAGGSTRNGRDSEAKRLGVKRFGGESVLAGSIIVRQRGTKFHAGANVGCGRDHTLFAKADGKVKFEVKGPKNRKFISIEAE</sequence>
<accession>B7M091</accession>
<protein>
    <recommendedName>
        <fullName evidence="1">Large ribosomal subunit protein bL27</fullName>
    </recommendedName>
    <alternativeName>
        <fullName evidence="3">50S ribosomal protein L27</fullName>
    </alternativeName>
</protein>
<name>RL27_ECO8A</name>
<proteinExistence type="inferred from homology"/>
<organism>
    <name type="scientific">Escherichia coli O8 (strain IAI1)</name>
    <dbReference type="NCBI Taxonomy" id="585034"/>
    <lineage>
        <taxon>Bacteria</taxon>
        <taxon>Pseudomonadati</taxon>
        <taxon>Pseudomonadota</taxon>
        <taxon>Gammaproteobacteria</taxon>
        <taxon>Enterobacterales</taxon>
        <taxon>Enterobacteriaceae</taxon>
        <taxon>Escherichia</taxon>
    </lineage>
</organism>
<evidence type="ECO:0000255" key="1">
    <source>
        <dbReference type="HAMAP-Rule" id="MF_00539"/>
    </source>
</evidence>
<evidence type="ECO:0000256" key="2">
    <source>
        <dbReference type="SAM" id="MobiDB-lite"/>
    </source>
</evidence>
<evidence type="ECO:0000305" key="3"/>
<dbReference type="EMBL" id="CU928160">
    <property type="protein sequence ID" value="CAR00147.1"/>
    <property type="molecule type" value="Genomic_DNA"/>
</dbReference>
<dbReference type="RefSeq" id="WP_000940595.1">
    <property type="nucleotide sequence ID" value="NC_011741.1"/>
</dbReference>
<dbReference type="SMR" id="B7M091"/>
<dbReference type="GeneID" id="93778796"/>
<dbReference type="KEGG" id="ecr:ECIAI1_3333"/>
<dbReference type="HOGENOM" id="CLU_095424_4_1_6"/>
<dbReference type="GO" id="GO:0022625">
    <property type="term" value="C:cytosolic large ribosomal subunit"/>
    <property type="evidence" value="ECO:0007669"/>
    <property type="project" value="TreeGrafter"/>
</dbReference>
<dbReference type="GO" id="GO:0003735">
    <property type="term" value="F:structural constituent of ribosome"/>
    <property type="evidence" value="ECO:0007669"/>
    <property type="project" value="InterPro"/>
</dbReference>
<dbReference type="GO" id="GO:0006412">
    <property type="term" value="P:translation"/>
    <property type="evidence" value="ECO:0007669"/>
    <property type="project" value="UniProtKB-UniRule"/>
</dbReference>
<dbReference type="FunFam" id="2.40.50.100:FF:000001">
    <property type="entry name" value="50S ribosomal protein L27"/>
    <property type="match status" value="1"/>
</dbReference>
<dbReference type="Gene3D" id="2.40.50.100">
    <property type="match status" value="1"/>
</dbReference>
<dbReference type="HAMAP" id="MF_00539">
    <property type="entry name" value="Ribosomal_bL27"/>
    <property type="match status" value="1"/>
</dbReference>
<dbReference type="InterPro" id="IPR001684">
    <property type="entry name" value="Ribosomal_bL27"/>
</dbReference>
<dbReference type="InterPro" id="IPR018261">
    <property type="entry name" value="Ribosomal_bL27_CS"/>
</dbReference>
<dbReference type="NCBIfam" id="TIGR00062">
    <property type="entry name" value="L27"/>
    <property type="match status" value="1"/>
</dbReference>
<dbReference type="PANTHER" id="PTHR15893:SF0">
    <property type="entry name" value="LARGE RIBOSOMAL SUBUNIT PROTEIN BL27M"/>
    <property type="match status" value="1"/>
</dbReference>
<dbReference type="PANTHER" id="PTHR15893">
    <property type="entry name" value="RIBOSOMAL PROTEIN L27"/>
    <property type="match status" value="1"/>
</dbReference>
<dbReference type="Pfam" id="PF01016">
    <property type="entry name" value="Ribosomal_L27"/>
    <property type="match status" value="1"/>
</dbReference>
<dbReference type="PRINTS" id="PR00063">
    <property type="entry name" value="RIBOSOMALL27"/>
</dbReference>
<dbReference type="SUPFAM" id="SSF110324">
    <property type="entry name" value="Ribosomal L27 protein-like"/>
    <property type="match status" value="1"/>
</dbReference>
<dbReference type="PROSITE" id="PS00831">
    <property type="entry name" value="RIBOSOMAL_L27"/>
    <property type="match status" value="1"/>
</dbReference>
<gene>
    <name evidence="1" type="primary">rpmA</name>
    <name type="ordered locus">ECIAI1_3333</name>
</gene>
<comment type="similarity">
    <text evidence="1">Belongs to the bacterial ribosomal protein bL27 family.</text>
</comment>
<feature type="chain" id="PRO_1000128744" description="Large ribosomal subunit protein bL27">
    <location>
        <begin position="1"/>
        <end position="85"/>
    </location>
</feature>
<feature type="region of interest" description="Disordered" evidence="2">
    <location>
        <begin position="1"/>
        <end position="20"/>
    </location>
</feature>
<reference key="1">
    <citation type="journal article" date="2009" name="PLoS Genet.">
        <title>Organised genome dynamics in the Escherichia coli species results in highly diverse adaptive paths.</title>
        <authorList>
            <person name="Touchon M."/>
            <person name="Hoede C."/>
            <person name="Tenaillon O."/>
            <person name="Barbe V."/>
            <person name="Baeriswyl S."/>
            <person name="Bidet P."/>
            <person name="Bingen E."/>
            <person name="Bonacorsi S."/>
            <person name="Bouchier C."/>
            <person name="Bouvet O."/>
            <person name="Calteau A."/>
            <person name="Chiapello H."/>
            <person name="Clermont O."/>
            <person name="Cruveiller S."/>
            <person name="Danchin A."/>
            <person name="Diard M."/>
            <person name="Dossat C."/>
            <person name="Karoui M.E."/>
            <person name="Frapy E."/>
            <person name="Garry L."/>
            <person name="Ghigo J.M."/>
            <person name="Gilles A.M."/>
            <person name="Johnson J."/>
            <person name="Le Bouguenec C."/>
            <person name="Lescat M."/>
            <person name="Mangenot S."/>
            <person name="Martinez-Jehanne V."/>
            <person name="Matic I."/>
            <person name="Nassif X."/>
            <person name="Oztas S."/>
            <person name="Petit M.A."/>
            <person name="Pichon C."/>
            <person name="Rouy Z."/>
            <person name="Ruf C.S."/>
            <person name="Schneider D."/>
            <person name="Tourret J."/>
            <person name="Vacherie B."/>
            <person name="Vallenet D."/>
            <person name="Medigue C."/>
            <person name="Rocha E.P.C."/>
            <person name="Denamur E."/>
        </authorList>
    </citation>
    <scope>NUCLEOTIDE SEQUENCE [LARGE SCALE GENOMIC DNA]</scope>
    <source>
        <strain>IAI1</strain>
    </source>
</reference>